<evidence type="ECO:0000255" key="1">
    <source>
        <dbReference type="HAMAP-Rule" id="MF_00120"/>
    </source>
</evidence>
<name>GATA_SYMTH</name>
<keyword id="KW-0067">ATP-binding</keyword>
<keyword id="KW-0436">Ligase</keyword>
<keyword id="KW-0547">Nucleotide-binding</keyword>
<keyword id="KW-0648">Protein biosynthesis</keyword>
<keyword id="KW-1185">Reference proteome</keyword>
<organism>
    <name type="scientific">Symbiobacterium thermophilum (strain DSM 24528 / JCM 14929 / IAM 14863 / T)</name>
    <dbReference type="NCBI Taxonomy" id="292459"/>
    <lineage>
        <taxon>Bacteria</taxon>
        <taxon>Bacillati</taxon>
        <taxon>Bacillota</taxon>
        <taxon>Clostridia</taxon>
        <taxon>Eubacteriales</taxon>
        <taxon>Symbiobacteriaceae</taxon>
        <taxon>Symbiobacterium</taxon>
    </lineage>
</organism>
<sequence>MLSAARLNRLFLAGELSAVEIAESALSRIAQVEPAVGAFITVAADHVIERAKKLDARRKAGDTELGPLAGVPIAVKDNICTSGMETTCASRILKGYVSPFDATVVERLRAAGAMIIGKANMDEFAMGSSGESSAFGVTRNPWDLERVPGGSSSGSAAAVAAGEAPLALGTDTGGSIRQPAAFTGIVGLKPTYGYVSRYGVVAFASSLDQVGPMGRDVEDVARLFEVIAGPDRRDATNAGRTPPALKFGGEPSLSGVRLGVPKELLGPGIDPGVKARVEEAIAQLEELGATVEECSLPSTEYALSAYYVIAVAEASSNLARFDGVRYGYRAAQAGGLHEMYSKTRGEGFGTEVKRRIMLGTYVLSAGHYDAYYRRAQQVRTLVVRDFERAFERYDALVTPTTPFTAWKIGEKVDDPVSMYLGDICTIPVNLAGLPAVSVPCGFVDGLPVGMQLIGKPFADTQILQIAWAYQKVTKHHEARPALTEEGGR</sequence>
<comment type="function">
    <text evidence="1">Allows the formation of correctly charged Gln-tRNA(Gln) through the transamidation of misacylated Glu-tRNA(Gln) in organisms which lack glutaminyl-tRNA synthetase. The reaction takes place in the presence of glutamine and ATP through an activated gamma-phospho-Glu-tRNA(Gln).</text>
</comment>
<comment type="catalytic activity">
    <reaction evidence="1">
        <text>L-glutamyl-tRNA(Gln) + L-glutamine + ATP + H2O = L-glutaminyl-tRNA(Gln) + L-glutamate + ADP + phosphate + H(+)</text>
        <dbReference type="Rhea" id="RHEA:17521"/>
        <dbReference type="Rhea" id="RHEA-COMP:9681"/>
        <dbReference type="Rhea" id="RHEA-COMP:9684"/>
        <dbReference type="ChEBI" id="CHEBI:15377"/>
        <dbReference type="ChEBI" id="CHEBI:15378"/>
        <dbReference type="ChEBI" id="CHEBI:29985"/>
        <dbReference type="ChEBI" id="CHEBI:30616"/>
        <dbReference type="ChEBI" id="CHEBI:43474"/>
        <dbReference type="ChEBI" id="CHEBI:58359"/>
        <dbReference type="ChEBI" id="CHEBI:78520"/>
        <dbReference type="ChEBI" id="CHEBI:78521"/>
        <dbReference type="ChEBI" id="CHEBI:456216"/>
        <dbReference type="EC" id="6.3.5.7"/>
    </reaction>
</comment>
<comment type="subunit">
    <text evidence="1">Heterotrimer of A, B and C subunits.</text>
</comment>
<comment type="similarity">
    <text evidence="1">Belongs to the amidase family. GatA subfamily.</text>
</comment>
<proteinExistence type="inferred from homology"/>
<accession>Q67KJ2</accession>
<dbReference type="EC" id="6.3.5.7" evidence="1"/>
<dbReference type="EMBL" id="AP006840">
    <property type="protein sequence ID" value="BAD41806.1"/>
    <property type="molecule type" value="Genomic_DNA"/>
</dbReference>
<dbReference type="RefSeq" id="WP_011196940.1">
    <property type="nucleotide sequence ID" value="NC_006177.1"/>
</dbReference>
<dbReference type="SMR" id="Q67KJ2"/>
<dbReference type="STRING" id="292459.STH2821"/>
<dbReference type="KEGG" id="sth:STH2821"/>
<dbReference type="eggNOG" id="COG0154">
    <property type="taxonomic scope" value="Bacteria"/>
</dbReference>
<dbReference type="HOGENOM" id="CLU_009600_0_3_9"/>
<dbReference type="OrthoDB" id="9811471at2"/>
<dbReference type="Proteomes" id="UP000000417">
    <property type="component" value="Chromosome"/>
</dbReference>
<dbReference type="GO" id="GO:0030956">
    <property type="term" value="C:glutamyl-tRNA(Gln) amidotransferase complex"/>
    <property type="evidence" value="ECO:0007669"/>
    <property type="project" value="InterPro"/>
</dbReference>
<dbReference type="GO" id="GO:0005524">
    <property type="term" value="F:ATP binding"/>
    <property type="evidence" value="ECO:0007669"/>
    <property type="project" value="UniProtKB-KW"/>
</dbReference>
<dbReference type="GO" id="GO:0050567">
    <property type="term" value="F:glutaminyl-tRNA synthase (glutamine-hydrolyzing) activity"/>
    <property type="evidence" value="ECO:0007669"/>
    <property type="project" value="UniProtKB-UniRule"/>
</dbReference>
<dbReference type="GO" id="GO:0006412">
    <property type="term" value="P:translation"/>
    <property type="evidence" value="ECO:0007669"/>
    <property type="project" value="UniProtKB-UniRule"/>
</dbReference>
<dbReference type="Gene3D" id="3.90.1300.10">
    <property type="entry name" value="Amidase signature (AS) domain"/>
    <property type="match status" value="1"/>
</dbReference>
<dbReference type="HAMAP" id="MF_00120">
    <property type="entry name" value="GatA"/>
    <property type="match status" value="1"/>
</dbReference>
<dbReference type="InterPro" id="IPR000120">
    <property type="entry name" value="Amidase"/>
</dbReference>
<dbReference type="InterPro" id="IPR020556">
    <property type="entry name" value="Amidase_CS"/>
</dbReference>
<dbReference type="InterPro" id="IPR023631">
    <property type="entry name" value="Amidase_dom"/>
</dbReference>
<dbReference type="InterPro" id="IPR036928">
    <property type="entry name" value="AS_sf"/>
</dbReference>
<dbReference type="InterPro" id="IPR004412">
    <property type="entry name" value="GatA"/>
</dbReference>
<dbReference type="NCBIfam" id="TIGR00132">
    <property type="entry name" value="gatA"/>
    <property type="match status" value="1"/>
</dbReference>
<dbReference type="PANTHER" id="PTHR11895:SF151">
    <property type="entry name" value="GLUTAMYL-TRNA(GLN) AMIDOTRANSFERASE SUBUNIT A"/>
    <property type="match status" value="1"/>
</dbReference>
<dbReference type="PANTHER" id="PTHR11895">
    <property type="entry name" value="TRANSAMIDASE"/>
    <property type="match status" value="1"/>
</dbReference>
<dbReference type="Pfam" id="PF01425">
    <property type="entry name" value="Amidase"/>
    <property type="match status" value="1"/>
</dbReference>
<dbReference type="SUPFAM" id="SSF75304">
    <property type="entry name" value="Amidase signature (AS) enzymes"/>
    <property type="match status" value="1"/>
</dbReference>
<dbReference type="PROSITE" id="PS00571">
    <property type="entry name" value="AMIDASES"/>
    <property type="match status" value="1"/>
</dbReference>
<reference key="1">
    <citation type="journal article" date="2004" name="Nucleic Acids Res.">
        <title>Genome sequence of Symbiobacterium thermophilum, an uncultivable bacterium that depends on microbial commensalism.</title>
        <authorList>
            <person name="Ueda K."/>
            <person name="Yamashita A."/>
            <person name="Ishikawa J."/>
            <person name="Shimada M."/>
            <person name="Watsuji T."/>
            <person name="Morimura K."/>
            <person name="Ikeda H."/>
            <person name="Hattori M."/>
            <person name="Beppu T."/>
        </authorList>
    </citation>
    <scope>NUCLEOTIDE SEQUENCE [LARGE SCALE GENOMIC DNA]</scope>
    <source>
        <strain>DSM 24528 / JCM 14929 / IAM 14863 / T</strain>
    </source>
</reference>
<protein>
    <recommendedName>
        <fullName evidence="1">Glutamyl-tRNA(Gln) amidotransferase subunit A</fullName>
        <shortName evidence="1">Glu-ADT subunit A</shortName>
        <ecNumber evidence="1">6.3.5.7</ecNumber>
    </recommendedName>
</protein>
<gene>
    <name evidence="1" type="primary">gatA</name>
    <name type="ordered locus">STH2821</name>
</gene>
<feature type="chain" id="PRO_0000241162" description="Glutamyl-tRNA(Gln) amidotransferase subunit A">
    <location>
        <begin position="1"/>
        <end position="488"/>
    </location>
</feature>
<feature type="active site" description="Charge relay system" evidence="1">
    <location>
        <position position="76"/>
    </location>
</feature>
<feature type="active site" description="Charge relay system" evidence="1">
    <location>
        <position position="151"/>
    </location>
</feature>
<feature type="active site" description="Acyl-ester intermediate" evidence="1">
    <location>
        <position position="175"/>
    </location>
</feature>